<protein>
    <recommendedName>
        <fullName evidence="1">UvrABC system protein B</fullName>
        <shortName evidence="1">Protein UvrB</shortName>
    </recommendedName>
    <alternativeName>
        <fullName evidence="1">Excinuclease ABC subunit B</fullName>
    </alternativeName>
</protein>
<evidence type="ECO:0000255" key="1">
    <source>
        <dbReference type="HAMAP-Rule" id="MF_00204"/>
    </source>
</evidence>
<accession>Q8RGR2</accession>
<name>UVRB_FUSNN</name>
<proteinExistence type="inferred from homology"/>
<sequence>MENNLFKIHSDYKPTGDQPTAIDSIVKNIENGVKDQVLLGVTGSGKTFTIANVIERVQRPSLIIAPNKTLAAQLYSEYKKFFPENAVEYFVSYYDYYQPEAYIKTTDTYIEKDSSVNDEIDKLRNAATAALIHRRDVIIVASVSSIYGLGSPDTYRRMTIPIDKQTGISRKELMKRLIALRYDRNDVAFERGQFRIKGDVIDIYPSYMNNGYRLEYWGDDLEEISEINTLTGQKVKKNLERIVIYPATQYLTADDDKDRIIQEIKDDLKVEVKKFEDDKKLLEAQRLRQRTEYDLEMITEIGYCKGIENYSRYLAGKNPGDTPDTLFEYFPKDFLLFIDESHITVPQVRGMYNGDRARKESLVENGFRLKAALDNRPLRFEEFREKSNQTVFISATPGDFEVEVSDNHIAEQLIRPTGIVDPEIEIRPTKNQVDDLLDEIRKRAAKKERVLVTTLTKKIAEELTEYYIELGVKVKYMHSDIDTLERIEIIRALRKGEIDVIIGINLLREGLDIPEVSLVAIMEADKEGFLRSRRSLVQTIGRAARNVEGRVILYADIMTDSMKEAITETERRRKIQKEYNAYNHIDPKSIIKEIAEDLINLDYGIEEKKFENDKKVFRNKTDIEKEITKLEKKIKKLVEELDFEQAIILRDEMLKLKELLLEF</sequence>
<comment type="function">
    <text evidence="1">The UvrABC repair system catalyzes the recognition and processing of DNA lesions. A damage recognition complex composed of 2 UvrA and 2 UvrB subunits scans DNA for abnormalities. Upon binding of the UvrA(2)B(2) complex to a putative damaged site, the DNA wraps around one UvrB monomer. DNA wrap is dependent on ATP binding by UvrB and probably causes local melting of the DNA helix, facilitating insertion of UvrB beta-hairpin between the DNA strands. Then UvrB probes one DNA strand for the presence of a lesion. If a lesion is found the UvrA subunits dissociate and the UvrB-DNA preincision complex is formed. This complex is subsequently bound by UvrC and the second UvrB is released. If no lesion is found, the DNA wraps around the other UvrB subunit that will check the other stand for damage.</text>
</comment>
<comment type="subunit">
    <text evidence="1">Forms a heterotetramer with UvrA during the search for lesions. Interacts with UvrC in an incision complex.</text>
</comment>
<comment type="subcellular location">
    <subcellularLocation>
        <location evidence="1">Cytoplasm</location>
    </subcellularLocation>
</comment>
<comment type="domain">
    <text evidence="1">The beta-hairpin motif is involved in DNA binding.</text>
</comment>
<comment type="similarity">
    <text evidence="1">Belongs to the UvrB family.</text>
</comment>
<reference key="1">
    <citation type="journal article" date="2002" name="J. Bacteriol.">
        <title>Genome sequence and analysis of the oral bacterium Fusobacterium nucleatum strain ATCC 25586.</title>
        <authorList>
            <person name="Kapatral V."/>
            <person name="Anderson I."/>
            <person name="Ivanova N."/>
            <person name="Reznik G."/>
            <person name="Los T."/>
            <person name="Lykidis A."/>
            <person name="Bhattacharyya A."/>
            <person name="Bartman A."/>
            <person name="Gardner W."/>
            <person name="Grechkin G."/>
            <person name="Zhu L."/>
            <person name="Vasieva O."/>
            <person name="Chu L."/>
            <person name="Kogan Y."/>
            <person name="Chaga O."/>
            <person name="Goltsman E."/>
            <person name="Bernal A."/>
            <person name="Larsen N."/>
            <person name="D'Souza M."/>
            <person name="Walunas T."/>
            <person name="Pusch G."/>
            <person name="Haselkorn R."/>
            <person name="Fonstein M."/>
            <person name="Kyrpides N.C."/>
            <person name="Overbeek R."/>
        </authorList>
    </citation>
    <scope>NUCLEOTIDE SEQUENCE [LARGE SCALE GENOMIC DNA]</scope>
    <source>
        <strain>ATCC 25586 / DSM 15643 / BCRC 10681 / CIP 101130 / JCM 8532 / KCTC 2640 / LMG 13131 / VPI 4355</strain>
    </source>
</reference>
<organism>
    <name type="scientific">Fusobacterium nucleatum subsp. nucleatum (strain ATCC 25586 / DSM 15643 / BCRC 10681 / CIP 101130 / JCM 8532 / KCTC 2640 / LMG 13131 / VPI 4355)</name>
    <dbReference type="NCBI Taxonomy" id="190304"/>
    <lineage>
        <taxon>Bacteria</taxon>
        <taxon>Fusobacteriati</taxon>
        <taxon>Fusobacteriota</taxon>
        <taxon>Fusobacteriia</taxon>
        <taxon>Fusobacteriales</taxon>
        <taxon>Fusobacteriaceae</taxon>
        <taxon>Fusobacterium</taxon>
    </lineage>
</organism>
<gene>
    <name evidence="1" type="primary">uvrB</name>
    <name type="ordered locus">FN0224</name>
</gene>
<dbReference type="EMBL" id="AE009951">
    <property type="protein sequence ID" value="AAL94430.1"/>
    <property type="molecule type" value="Genomic_DNA"/>
</dbReference>
<dbReference type="RefSeq" id="NP_603131.1">
    <property type="nucleotide sequence ID" value="NC_003454.1"/>
</dbReference>
<dbReference type="RefSeq" id="WP_011016236.1">
    <property type="nucleotide sequence ID" value="NZ_CP028101.1"/>
</dbReference>
<dbReference type="SMR" id="Q8RGR2"/>
<dbReference type="FunCoup" id="Q8RGR2">
    <property type="interactions" value="253"/>
</dbReference>
<dbReference type="STRING" id="190304.FN0224"/>
<dbReference type="PaxDb" id="190304-FN0224"/>
<dbReference type="EnsemblBacteria" id="AAL94430">
    <property type="protein sequence ID" value="AAL94430"/>
    <property type="gene ID" value="FN0224"/>
</dbReference>
<dbReference type="GeneID" id="79783242"/>
<dbReference type="KEGG" id="fnu:FN0224"/>
<dbReference type="PATRIC" id="fig|190304.8.peg.805"/>
<dbReference type="eggNOG" id="COG0556">
    <property type="taxonomic scope" value="Bacteria"/>
</dbReference>
<dbReference type="HOGENOM" id="CLU_009621_2_1_0"/>
<dbReference type="InParanoid" id="Q8RGR2"/>
<dbReference type="BioCyc" id="FNUC190304:G1FZS-826-MONOMER"/>
<dbReference type="Proteomes" id="UP000002521">
    <property type="component" value="Chromosome"/>
</dbReference>
<dbReference type="GO" id="GO:0005737">
    <property type="term" value="C:cytoplasm"/>
    <property type="evidence" value="ECO:0007669"/>
    <property type="project" value="UniProtKB-SubCell"/>
</dbReference>
<dbReference type="GO" id="GO:0009380">
    <property type="term" value="C:excinuclease repair complex"/>
    <property type="evidence" value="ECO:0000318"/>
    <property type="project" value="GO_Central"/>
</dbReference>
<dbReference type="GO" id="GO:0005524">
    <property type="term" value="F:ATP binding"/>
    <property type="evidence" value="ECO:0007669"/>
    <property type="project" value="UniProtKB-UniRule"/>
</dbReference>
<dbReference type="GO" id="GO:0016887">
    <property type="term" value="F:ATP hydrolysis activity"/>
    <property type="evidence" value="ECO:0007669"/>
    <property type="project" value="InterPro"/>
</dbReference>
<dbReference type="GO" id="GO:0003677">
    <property type="term" value="F:DNA binding"/>
    <property type="evidence" value="ECO:0007669"/>
    <property type="project" value="UniProtKB-UniRule"/>
</dbReference>
<dbReference type="GO" id="GO:0009381">
    <property type="term" value="F:excinuclease ABC activity"/>
    <property type="evidence" value="ECO:0007669"/>
    <property type="project" value="UniProtKB-UniRule"/>
</dbReference>
<dbReference type="GO" id="GO:0000715">
    <property type="term" value="P:nucleotide-excision repair, DNA damage recognition"/>
    <property type="evidence" value="ECO:0000318"/>
    <property type="project" value="GO_Central"/>
</dbReference>
<dbReference type="GO" id="GO:0009432">
    <property type="term" value="P:SOS response"/>
    <property type="evidence" value="ECO:0007669"/>
    <property type="project" value="UniProtKB-UniRule"/>
</dbReference>
<dbReference type="CDD" id="cd17916">
    <property type="entry name" value="DEXHc_UvrB"/>
    <property type="match status" value="1"/>
</dbReference>
<dbReference type="CDD" id="cd18790">
    <property type="entry name" value="SF2_C_UvrB"/>
    <property type="match status" value="1"/>
</dbReference>
<dbReference type="Gene3D" id="3.40.50.300">
    <property type="entry name" value="P-loop containing nucleotide triphosphate hydrolases"/>
    <property type="match status" value="3"/>
</dbReference>
<dbReference type="Gene3D" id="4.10.860.10">
    <property type="entry name" value="UVR domain"/>
    <property type="match status" value="1"/>
</dbReference>
<dbReference type="HAMAP" id="MF_00204">
    <property type="entry name" value="UvrB"/>
    <property type="match status" value="1"/>
</dbReference>
<dbReference type="InterPro" id="IPR006935">
    <property type="entry name" value="Helicase/UvrB_N"/>
</dbReference>
<dbReference type="InterPro" id="IPR014001">
    <property type="entry name" value="Helicase_ATP-bd"/>
</dbReference>
<dbReference type="InterPro" id="IPR001650">
    <property type="entry name" value="Helicase_C-like"/>
</dbReference>
<dbReference type="InterPro" id="IPR027417">
    <property type="entry name" value="P-loop_NTPase"/>
</dbReference>
<dbReference type="InterPro" id="IPR001943">
    <property type="entry name" value="UVR_dom"/>
</dbReference>
<dbReference type="InterPro" id="IPR036876">
    <property type="entry name" value="UVR_dom_sf"/>
</dbReference>
<dbReference type="InterPro" id="IPR004807">
    <property type="entry name" value="UvrB"/>
</dbReference>
<dbReference type="InterPro" id="IPR041471">
    <property type="entry name" value="UvrB_inter"/>
</dbReference>
<dbReference type="InterPro" id="IPR024759">
    <property type="entry name" value="UvrB_YAD/RRR_dom"/>
</dbReference>
<dbReference type="NCBIfam" id="NF003673">
    <property type="entry name" value="PRK05298.1"/>
    <property type="match status" value="1"/>
</dbReference>
<dbReference type="NCBIfam" id="TIGR00631">
    <property type="entry name" value="uvrb"/>
    <property type="match status" value="1"/>
</dbReference>
<dbReference type="PANTHER" id="PTHR24029">
    <property type="entry name" value="UVRABC SYSTEM PROTEIN B"/>
    <property type="match status" value="1"/>
</dbReference>
<dbReference type="PANTHER" id="PTHR24029:SF0">
    <property type="entry name" value="UVRABC SYSTEM PROTEIN B"/>
    <property type="match status" value="1"/>
</dbReference>
<dbReference type="Pfam" id="PF00271">
    <property type="entry name" value="Helicase_C"/>
    <property type="match status" value="1"/>
</dbReference>
<dbReference type="Pfam" id="PF04851">
    <property type="entry name" value="ResIII"/>
    <property type="match status" value="1"/>
</dbReference>
<dbReference type="Pfam" id="PF02151">
    <property type="entry name" value="UVR"/>
    <property type="match status" value="1"/>
</dbReference>
<dbReference type="Pfam" id="PF12344">
    <property type="entry name" value="UvrB"/>
    <property type="match status" value="1"/>
</dbReference>
<dbReference type="Pfam" id="PF17757">
    <property type="entry name" value="UvrB_inter"/>
    <property type="match status" value="1"/>
</dbReference>
<dbReference type="SMART" id="SM00487">
    <property type="entry name" value="DEXDc"/>
    <property type="match status" value="1"/>
</dbReference>
<dbReference type="SMART" id="SM00490">
    <property type="entry name" value="HELICc"/>
    <property type="match status" value="1"/>
</dbReference>
<dbReference type="SUPFAM" id="SSF46600">
    <property type="entry name" value="C-terminal UvrC-binding domain of UvrB"/>
    <property type="match status" value="1"/>
</dbReference>
<dbReference type="SUPFAM" id="SSF52540">
    <property type="entry name" value="P-loop containing nucleoside triphosphate hydrolases"/>
    <property type="match status" value="2"/>
</dbReference>
<dbReference type="PROSITE" id="PS51192">
    <property type="entry name" value="HELICASE_ATP_BIND_1"/>
    <property type="match status" value="1"/>
</dbReference>
<dbReference type="PROSITE" id="PS51194">
    <property type="entry name" value="HELICASE_CTER"/>
    <property type="match status" value="1"/>
</dbReference>
<dbReference type="PROSITE" id="PS50151">
    <property type="entry name" value="UVR"/>
    <property type="match status" value="1"/>
</dbReference>
<feature type="chain" id="PRO_0000138393" description="UvrABC system protein B">
    <location>
        <begin position="1"/>
        <end position="663"/>
    </location>
</feature>
<feature type="domain" description="Helicase ATP-binding" evidence="1">
    <location>
        <begin position="27"/>
        <end position="414"/>
    </location>
</feature>
<feature type="domain" description="Helicase C-terminal" evidence="1">
    <location>
        <begin position="432"/>
        <end position="594"/>
    </location>
</feature>
<feature type="domain" description="UVR" evidence="1">
    <location>
        <begin position="624"/>
        <end position="659"/>
    </location>
</feature>
<feature type="short sequence motif" description="Beta-hairpin">
    <location>
        <begin position="93"/>
        <end position="116"/>
    </location>
</feature>
<feature type="binding site" evidence="1">
    <location>
        <begin position="40"/>
        <end position="47"/>
    </location>
    <ligand>
        <name>ATP</name>
        <dbReference type="ChEBI" id="CHEBI:30616"/>
    </ligand>
</feature>
<keyword id="KW-0067">ATP-binding</keyword>
<keyword id="KW-0963">Cytoplasm</keyword>
<keyword id="KW-0227">DNA damage</keyword>
<keyword id="KW-0228">DNA excision</keyword>
<keyword id="KW-0234">DNA repair</keyword>
<keyword id="KW-0267">Excision nuclease</keyword>
<keyword id="KW-0547">Nucleotide-binding</keyword>
<keyword id="KW-1185">Reference proteome</keyword>
<keyword id="KW-0742">SOS response</keyword>